<evidence type="ECO:0000255" key="1">
    <source>
        <dbReference type="HAMAP-Rule" id="MF_01147"/>
    </source>
</evidence>
<dbReference type="EC" id="2.5.1.145" evidence="1"/>
<dbReference type="EMBL" id="CP001048">
    <property type="protein sequence ID" value="ACC90111.1"/>
    <property type="molecule type" value="Genomic_DNA"/>
</dbReference>
<dbReference type="RefSeq" id="WP_002211383.1">
    <property type="nucleotide sequence ID" value="NZ_CP009780.1"/>
</dbReference>
<dbReference type="SMR" id="B2JZ67"/>
<dbReference type="GeneID" id="57973850"/>
<dbReference type="KEGG" id="ypb:YPTS_3156"/>
<dbReference type="PATRIC" id="fig|502801.10.peg.2589"/>
<dbReference type="UniPathway" id="UPA00664"/>
<dbReference type="GO" id="GO:0005886">
    <property type="term" value="C:plasma membrane"/>
    <property type="evidence" value="ECO:0007669"/>
    <property type="project" value="UniProtKB-SubCell"/>
</dbReference>
<dbReference type="GO" id="GO:0008961">
    <property type="term" value="F:phosphatidylglycerol-prolipoprotein diacylglyceryl transferase activity"/>
    <property type="evidence" value="ECO:0007669"/>
    <property type="project" value="UniProtKB-UniRule"/>
</dbReference>
<dbReference type="GO" id="GO:0042158">
    <property type="term" value="P:lipoprotein biosynthetic process"/>
    <property type="evidence" value="ECO:0007669"/>
    <property type="project" value="UniProtKB-UniRule"/>
</dbReference>
<dbReference type="HAMAP" id="MF_01147">
    <property type="entry name" value="Lgt"/>
    <property type="match status" value="1"/>
</dbReference>
<dbReference type="InterPro" id="IPR001640">
    <property type="entry name" value="Lgt"/>
</dbReference>
<dbReference type="NCBIfam" id="TIGR00544">
    <property type="entry name" value="lgt"/>
    <property type="match status" value="1"/>
</dbReference>
<dbReference type="PANTHER" id="PTHR30589:SF0">
    <property type="entry name" value="PHOSPHATIDYLGLYCEROL--PROLIPOPROTEIN DIACYLGLYCERYL TRANSFERASE"/>
    <property type="match status" value="1"/>
</dbReference>
<dbReference type="PANTHER" id="PTHR30589">
    <property type="entry name" value="PROLIPOPROTEIN DIACYLGLYCERYL TRANSFERASE"/>
    <property type="match status" value="1"/>
</dbReference>
<dbReference type="Pfam" id="PF01790">
    <property type="entry name" value="LGT"/>
    <property type="match status" value="1"/>
</dbReference>
<dbReference type="PROSITE" id="PS01311">
    <property type="entry name" value="LGT"/>
    <property type="match status" value="1"/>
</dbReference>
<protein>
    <recommendedName>
        <fullName evidence="1">Phosphatidylglycerol--prolipoprotein diacylglyceryl transferase</fullName>
        <ecNumber evidence="1">2.5.1.145</ecNumber>
    </recommendedName>
</protein>
<organism>
    <name type="scientific">Yersinia pseudotuberculosis serotype IB (strain PB1/+)</name>
    <dbReference type="NCBI Taxonomy" id="502801"/>
    <lineage>
        <taxon>Bacteria</taxon>
        <taxon>Pseudomonadati</taxon>
        <taxon>Pseudomonadota</taxon>
        <taxon>Gammaproteobacteria</taxon>
        <taxon>Enterobacterales</taxon>
        <taxon>Yersiniaceae</taxon>
        <taxon>Yersinia</taxon>
    </lineage>
</organism>
<comment type="function">
    <text evidence="1">Catalyzes the transfer of the diacylglyceryl group from phosphatidylglycerol to the sulfhydryl group of the N-terminal cysteine of a prolipoprotein, the first step in the formation of mature lipoproteins.</text>
</comment>
<comment type="catalytic activity">
    <reaction evidence="1">
        <text>L-cysteinyl-[prolipoprotein] + a 1,2-diacyl-sn-glycero-3-phospho-(1'-sn-glycerol) = an S-1,2-diacyl-sn-glyceryl-L-cysteinyl-[prolipoprotein] + sn-glycerol 1-phosphate + H(+)</text>
        <dbReference type="Rhea" id="RHEA:56712"/>
        <dbReference type="Rhea" id="RHEA-COMP:14679"/>
        <dbReference type="Rhea" id="RHEA-COMP:14680"/>
        <dbReference type="ChEBI" id="CHEBI:15378"/>
        <dbReference type="ChEBI" id="CHEBI:29950"/>
        <dbReference type="ChEBI" id="CHEBI:57685"/>
        <dbReference type="ChEBI" id="CHEBI:64716"/>
        <dbReference type="ChEBI" id="CHEBI:140658"/>
        <dbReference type="EC" id="2.5.1.145"/>
    </reaction>
</comment>
<comment type="pathway">
    <text evidence="1">Protein modification; lipoprotein biosynthesis (diacylglyceryl transfer).</text>
</comment>
<comment type="subcellular location">
    <subcellularLocation>
        <location evidence="1">Cell inner membrane</location>
        <topology evidence="1">Multi-pass membrane protein</topology>
    </subcellularLocation>
</comment>
<comment type="similarity">
    <text evidence="1">Belongs to the Lgt family.</text>
</comment>
<reference key="1">
    <citation type="submission" date="2008-04" db="EMBL/GenBank/DDBJ databases">
        <title>Complete sequence of Yersinia pseudotuberculosis PB1/+.</title>
        <authorList>
            <person name="Copeland A."/>
            <person name="Lucas S."/>
            <person name="Lapidus A."/>
            <person name="Glavina del Rio T."/>
            <person name="Dalin E."/>
            <person name="Tice H."/>
            <person name="Bruce D."/>
            <person name="Goodwin L."/>
            <person name="Pitluck S."/>
            <person name="Munk A.C."/>
            <person name="Brettin T."/>
            <person name="Detter J.C."/>
            <person name="Han C."/>
            <person name="Tapia R."/>
            <person name="Schmutz J."/>
            <person name="Larimer F."/>
            <person name="Land M."/>
            <person name="Hauser L."/>
            <person name="Challacombe J.F."/>
            <person name="Green L."/>
            <person name="Lindler L.E."/>
            <person name="Nikolich M.P."/>
            <person name="Richardson P."/>
        </authorList>
    </citation>
    <scope>NUCLEOTIDE SEQUENCE [LARGE SCALE GENOMIC DNA]</scope>
    <source>
        <strain>PB1/+</strain>
    </source>
</reference>
<sequence>MSNSYLAFPKFDPVIFSIGPVSLHWYGLMYLVGFVFAMWLAVRRANKPGSGWTKEEVENLLYAGFLGVFIGGRVGYVLFYNLPMFLDNPLYLFKVWDGGMSFHGGLIGVICVMLWFARRTKRNFFQVADFIAPLIPFGLGAGRLGNFINAELWGRVTTDTPWAMLFPTSRNTDIAIVAADPAKWQAIFNQYGVLPRHPSQLYEMILEGVVLFIILNVFIRKPRPMGSVSGLFLIGYGTFRIIVECFRQPDEQLGLFEGMISMGQILSVPMILAGIIMMIWAYRRPTQKLS</sequence>
<feature type="chain" id="PRO_1000137476" description="Phosphatidylglycerol--prolipoprotein diacylglyceryl transferase">
    <location>
        <begin position="1"/>
        <end position="290"/>
    </location>
</feature>
<feature type="transmembrane region" description="Helical" evidence="1">
    <location>
        <begin position="21"/>
        <end position="41"/>
    </location>
</feature>
<feature type="transmembrane region" description="Helical" evidence="1">
    <location>
        <begin position="60"/>
        <end position="80"/>
    </location>
</feature>
<feature type="transmembrane region" description="Helical" evidence="1">
    <location>
        <begin position="96"/>
        <end position="116"/>
    </location>
</feature>
<feature type="transmembrane region" description="Helical" evidence="1">
    <location>
        <begin position="124"/>
        <end position="144"/>
    </location>
</feature>
<feature type="transmembrane region" description="Helical" evidence="1">
    <location>
        <begin position="199"/>
        <end position="219"/>
    </location>
</feature>
<feature type="transmembrane region" description="Helical" evidence="1">
    <location>
        <begin position="226"/>
        <end position="246"/>
    </location>
</feature>
<feature type="transmembrane region" description="Helical" evidence="1">
    <location>
        <begin position="260"/>
        <end position="280"/>
    </location>
</feature>
<feature type="binding site" evidence="1">
    <location>
        <position position="143"/>
    </location>
    <ligand>
        <name>a 1,2-diacyl-sn-glycero-3-phospho-(1'-sn-glycerol)</name>
        <dbReference type="ChEBI" id="CHEBI:64716"/>
    </ligand>
</feature>
<name>LGT_YERPB</name>
<accession>B2JZ67</accession>
<gene>
    <name evidence="1" type="primary">lgt</name>
    <name type="ordered locus">YPTS_3156</name>
</gene>
<proteinExistence type="inferred from homology"/>
<keyword id="KW-0997">Cell inner membrane</keyword>
<keyword id="KW-1003">Cell membrane</keyword>
<keyword id="KW-0472">Membrane</keyword>
<keyword id="KW-0808">Transferase</keyword>
<keyword id="KW-0812">Transmembrane</keyword>
<keyword id="KW-1133">Transmembrane helix</keyword>